<organism>
    <name type="scientific">Rickettsia akari (strain Hartford)</name>
    <dbReference type="NCBI Taxonomy" id="293614"/>
    <lineage>
        <taxon>Bacteria</taxon>
        <taxon>Pseudomonadati</taxon>
        <taxon>Pseudomonadota</taxon>
        <taxon>Alphaproteobacteria</taxon>
        <taxon>Rickettsiales</taxon>
        <taxon>Rickettsiaceae</taxon>
        <taxon>Rickettsieae</taxon>
        <taxon>Rickettsia</taxon>
        <taxon>spotted fever group</taxon>
    </lineage>
</organism>
<comment type="function">
    <text evidence="1">Responsible for the release of ribosomes from messenger RNA at the termination of protein biosynthesis. May increase the efficiency of translation by recycling ribosomes from one round of translation to another.</text>
</comment>
<comment type="subcellular location">
    <subcellularLocation>
        <location evidence="1">Cytoplasm</location>
    </subcellularLocation>
</comment>
<comment type="similarity">
    <text evidence="1">Belongs to the RRF family.</text>
</comment>
<evidence type="ECO:0000255" key="1">
    <source>
        <dbReference type="HAMAP-Rule" id="MF_00040"/>
    </source>
</evidence>
<name>RRF_RICAH</name>
<accession>A8GMC3</accession>
<gene>
    <name evidence="1" type="primary">frr</name>
    <name type="ordered locus">A1C_01090</name>
</gene>
<protein>
    <recommendedName>
        <fullName evidence="1">Ribosome-recycling factor</fullName>
        <shortName evidence="1">RRF</shortName>
    </recommendedName>
    <alternativeName>
        <fullName evidence="1">Ribosome-releasing factor</fullName>
    </alternativeName>
</protein>
<reference key="1">
    <citation type="submission" date="2007-09" db="EMBL/GenBank/DDBJ databases">
        <title>Complete genome sequence of Rickettsia akari.</title>
        <authorList>
            <person name="Madan A."/>
            <person name="Fahey J."/>
            <person name="Helton E."/>
            <person name="Ketteman M."/>
            <person name="Madan A."/>
            <person name="Rodrigues S."/>
            <person name="Sanchez A."/>
            <person name="Whiting M."/>
            <person name="Dasch G."/>
            <person name="Eremeeva M."/>
        </authorList>
    </citation>
    <scope>NUCLEOTIDE SEQUENCE [LARGE SCALE GENOMIC DNA]</scope>
    <source>
        <strain>Hartford</strain>
    </source>
</reference>
<proteinExistence type="inferred from homology"/>
<sequence>MDTETLKKILQEKMDKALKVLDHELKGLRTGRASVNLLDSVTVEAYGSKMLLSQVASLSTPDARTINVQVWDKSMVSSVEKGITIANLGLTPATDGQLIRLPIPALTEERRKELVKLAHKYGEDAKISLRNIRRDGNEELKKLEKDNIIAKDEHHNLSEQVQKLTDEYSSKVDSAIKQKEQDIMTV</sequence>
<dbReference type="EMBL" id="CP000847">
    <property type="protein sequence ID" value="ABV74548.1"/>
    <property type="molecule type" value="Genomic_DNA"/>
</dbReference>
<dbReference type="RefSeq" id="WP_012013418.1">
    <property type="nucleotide sequence ID" value="NC_009881.1"/>
</dbReference>
<dbReference type="SMR" id="A8GMC3"/>
<dbReference type="STRING" id="293614.A1C_01090"/>
<dbReference type="KEGG" id="rak:A1C_01090"/>
<dbReference type="eggNOG" id="COG0233">
    <property type="taxonomic scope" value="Bacteria"/>
</dbReference>
<dbReference type="HOGENOM" id="CLU_073981_2_1_5"/>
<dbReference type="Proteomes" id="UP000006830">
    <property type="component" value="Chromosome"/>
</dbReference>
<dbReference type="GO" id="GO:0005829">
    <property type="term" value="C:cytosol"/>
    <property type="evidence" value="ECO:0007669"/>
    <property type="project" value="GOC"/>
</dbReference>
<dbReference type="GO" id="GO:0043023">
    <property type="term" value="F:ribosomal large subunit binding"/>
    <property type="evidence" value="ECO:0007669"/>
    <property type="project" value="TreeGrafter"/>
</dbReference>
<dbReference type="GO" id="GO:0002184">
    <property type="term" value="P:cytoplasmic translational termination"/>
    <property type="evidence" value="ECO:0007669"/>
    <property type="project" value="TreeGrafter"/>
</dbReference>
<dbReference type="CDD" id="cd00520">
    <property type="entry name" value="RRF"/>
    <property type="match status" value="1"/>
</dbReference>
<dbReference type="FunFam" id="1.10.132.20:FF:000001">
    <property type="entry name" value="Ribosome-recycling factor"/>
    <property type="match status" value="1"/>
</dbReference>
<dbReference type="FunFam" id="3.30.1360.40:FF:000001">
    <property type="entry name" value="Ribosome-recycling factor"/>
    <property type="match status" value="1"/>
</dbReference>
<dbReference type="Gene3D" id="3.30.1360.40">
    <property type="match status" value="1"/>
</dbReference>
<dbReference type="Gene3D" id="1.10.132.20">
    <property type="entry name" value="Ribosome-recycling factor"/>
    <property type="match status" value="1"/>
</dbReference>
<dbReference type="HAMAP" id="MF_00040">
    <property type="entry name" value="RRF"/>
    <property type="match status" value="1"/>
</dbReference>
<dbReference type="InterPro" id="IPR002661">
    <property type="entry name" value="Ribosome_recyc_fac"/>
</dbReference>
<dbReference type="InterPro" id="IPR023584">
    <property type="entry name" value="Ribosome_recyc_fac_dom"/>
</dbReference>
<dbReference type="InterPro" id="IPR036191">
    <property type="entry name" value="RRF_sf"/>
</dbReference>
<dbReference type="NCBIfam" id="TIGR00496">
    <property type="entry name" value="frr"/>
    <property type="match status" value="1"/>
</dbReference>
<dbReference type="PANTHER" id="PTHR20982:SF3">
    <property type="entry name" value="MITOCHONDRIAL RIBOSOME RECYCLING FACTOR PSEUDO 1"/>
    <property type="match status" value="1"/>
</dbReference>
<dbReference type="PANTHER" id="PTHR20982">
    <property type="entry name" value="RIBOSOME RECYCLING FACTOR"/>
    <property type="match status" value="1"/>
</dbReference>
<dbReference type="Pfam" id="PF01765">
    <property type="entry name" value="RRF"/>
    <property type="match status" value="1"/>
</dbReference>
<dbReference type="SUPFAM" id="SSF55194">
    <property type="entry name" value="Ribosome recycling factor, RRF"/>
    <property type="match status" value="1"/>
</dbReference>
<feature type="chain" id="PRO_1000003247" description="Ribosome-recycling factor">
    <location>
        <begin position="1"/>
        <end position="186"/>
    </location>
</feature>
<keyword id="KW-0963">Cytoplasm</keyword>
<keyword id="KW-0648">Protein biosynthesis</keyword>